<reference key="1">
    <citation type="journal article" date="2003" name="Proc. Natl. Acad. Sci. U.S.A.">
        <title>The complete genome sequence of the Arabidopsis and tomato pathogen Pseudomonas syringae pv. tomato DC3000.</title>
        <authorList>
            <person name="Buell C.R."/>
            <person name="Joardar V."/>
            <person name="Lindeberg M."/>
            <person name="Selengut J."/>
            <person name="Paulsen I.T."/>
            <person name="Gwinn M.L."/>
            <person name="Dodson R.J."/>
            <person name="DeBoy R.T."/>
            <person name="Durkin A.S."/>
            <person name="Kolonay J.F."/>
            <person name="Madupu R."/>
            <person name="Daugherty S.C."/>
            <person name="Brinkac L.M."/>
            <person name="Beanan M.J."/>
            <person name="Haft D.H."/>
            <person name="Nelson W.C."/>
            <person name="Davidsen T.M."/>
            <person name="Zafar N."/>
            <person name="Zhou L."/>
            <person name="Liu J."/>
            <person name="Yuan Q."/>
            <person name="Khouri H.M."/>
            <person name="Fedorova N.B."/>
            <person name="Tran B."/>
            <person name="Russell D."/>
            <person name="Berry K.J."/>
            <person name="Utterback T.R."/>
            <person name="Van Aken S.E."/>
            <person name="Feldblyum T.V."/>
            <person name="D'Ascenzo M."/>
            <person name="Deng W.-L."/>
            <person name="Ramos A.R."/>
            <person name="Alfano J.R."/>
            <person name="Cartinhour S."/>
            <person name="Chatterjee A.K."/>
            <person name="Delaney T.P."/>
            <person name="Lazarowitz S.G."/>
            <person name="Martin G.B."/>
            <person name="Schneider D.J."/>
            <person name="Tang X."/>
            <person name="Bender C.L."/>
            <person name="White O."/>
            <person name="Fraser C.M."/>
            <person name="Collmer A."/>
        </authorList>
    </citation>
    <scope>NUCLEOTIDE SEQUENCE [LARGE SCALE GENOMIC DNA]</scope>
    <source>
        <strain>ATCC BAA-871 / DC3000</strain>
    </source>
</reference>
<protein>
    <recommendedName>
        <fullName evidence="1">3-dehydroquinate synthase</fullName>
        <shortName evidence="1">DHQS</shortName>
        <ecNumber evidence="1">4.2.3.4</ecNumber>
    </recommendedName>
</protein>
<dbReference type="EC" id="4.2.3.4" evidence="1"/>
<dbReference type="EMBL" id="AE016853">
    <property type="protein sequence ID" value="AAO58553.1"/>
    <property type="molecule type" value="Genomic_DNA"/>
</dbReference>
<dbReference type="RefSeq" id="NP_794858.1">
    <property type="nucleotide sequence ID" value="NC_004578.1"/>
</dbReference>
<dbReference type="RefSeq" id="WP_005765495.1">
    <property type="nucleotide sequence ID" value="NC_004578.1"/>
</dbReference>
<dbReference type="SMR" id="Q87V15"/>
<dbReference type="STRING" id="223283.PSPTO_5126"/>
<dbReference type="GeneID" id="1186811"/>
<dbReference type="KEGG" id="pst:PSPTO_5126"/>
<dbReference type="PATRIC" id="fig|223283.9.peg.5245"/>
<dbReference type="eggNOG" id="COG0337">
    <property type="taxonomic scope" value="Bacteria"/>
</dbReference>
<dbReference type="HOGENOM" id="CLU_001201_0_2_6"/>
<dbReference type="OrthoDB" id="9806583at2"/>
<dbReference type="PhylomeDB" id="Q87V15"/>
<dbReference type="UniPathway" id="UPA00053">
    <property type="reaction ID" value="UER00085"/>
</dbReference>
<dbReference type="Proteomes" id="UP000002515">
    <property type="component" value="Chromosome"/>
</dbReference>
<dbReference type="GO" id="GO:0005737">
    <property type="term" value="C:cytoplasm"/>
    <property type="evidence" value="ECO:0007669"/>
    <property type="project" value="UniProtKB-SubCell"/>
</dbReference>
<dbReference type="GO" id="GO:0003856">
    <property type="term" value="F:3-dehydroquinate synthase activity"/>
    <property type="evidence" value="ECO:0007669"/>
    <property type="project" value="UniProtKB-UniRule"/>
</dbReference>
<dbReference type="GO" id="GO:0046872">
    <property type="term" value="F:metal ion binding"/>
    <property type="evidence" value="ECO:0007669"/>
    <property type="project" value="UniProtKB-KW"/>
</dbReference>
<dbReference type="GO" id="GO:0000166">
    <property type="term" value="F:nucleotide binding"/>
    <property type="evidence" value="ECO:0007669"/>
    <property type="project" value="UniProtKB-KW"/>
</dbReference>
<dbReference type="GO" id="GO:0008652">
    <property type="term" value="P:amino acid biosynthetic process"/>
    <property type="evidence" value="ECO:0007669"/>
    <property type="project" value="UniProtKB-KW"/>
</dbReference>
<dbReference type="GO" id="GO:0009073">
    <property type="term" value="P:aromatic amino acid family biosynthetic process"/>
    <property type="evidence" value="ECO:0007669"/>
    <property type="project" value="UniProtKB-KW"/>
</dbReference>
<dbReference type="GO" id="GO:0009423">
    <property type="term" value="P:chorismate biosynthetic process"/>
    <property type="evidence" value="ECO:0007669"/>
    <property type="project" value="UniProtKB-UniRule"/>
</dbReference>
<dbReference type="CDD" id="cd08195">
    <property type="entry name" value="DHQS"/>
    <property type="match status" value="1"/>
</dbReference>
<dbReference type="FunFam" id="1.20.1090.10:FF:000002">
    <property type="entry name" value="3-dehydroquinate synthase"/>
    <property type="match status" value="1"/>
</dbReference>
<dbReference type="FunFam" id="3.40.50.1970:FF:000001">
    <property type="entry name" value="3-dehydroquinate synthase"/>
    <property type="match status" value="1"/>
</dbReference>
<dbReference type="Gene3D" id="3.40.50.1970">
    <property type="match status" value="1"/>
</dbReference>
<dbReference type="Gene3D" id="1.20.1090.10">
    <property type="entry name" value="Dehydroquinate synthase-like - alpha domain"/>
    <property type="match status" value="1"/>
</dbReference>
<dbReference type="HAMAP" id="MF_00110">
    <property type="entry name" value="DHQ_synthase"/>
    <property type="match status" value="1"/>
</dbReference>
<dbReference type="InterPro" id="IPR050071">
    <property type="entry name" value="Dehydroquinate_synthase"/>
</dbReference>
<dbReference type="InterPro" id="IPR016037">
    <property type="entry name" value="DHQ_synth_AroB"/>
</dbReference>
<dbReference type="InterPro" id="IPR030963">
    <property type="entry name" value="DHQ_synth_fam"/>
</dbReference>
<dbReference type="InterPro" id="IPR030960">
    <property type="entry name" value="DHQS/DOIS_N"/>
</dbReference>
<dbReference type="InterPro" id="IPR056179">
    <property type="entry name" value="DHQS_C"/>
</dbReference>
<dbReference type="NCBIfam" id="TIGR01357">
    <property type="entry name" value="aroB"/>
    <property type="match status" value="1"/>
</dbReference>
<dbReference type="PANTHER" id="PTHR43622">
    <property type="entry name" value="3-DEHYDROQUINATE SYNTHASE"/>
    <property type="match status" value="1"/>
</dbReference>
<dbReference type="PANTHER" id="PTHR43622:SF7">
    <property type="entry name" value="3-DEHYDROQUINATE SYNTHASE, CHLOROPLASTIC"/>
    <property type="match status" value="1"/>
</dbReference>
<dbReference type="Pfam" id="PF01761">
    <property type="entry name" value="DHQ_synthase"/>
    <property type="match status" value="1"/>
</dbReference>
<dbReference type="Pfam" id="PF24621">
    <property type="entry name" value="DHQS_C"/>
    <property type="match status" value="1"/>
</dbReference>
<dbReference type="PIRSF" id="PIRSF001455">
    <property type="entry name" value="DHQ_synth"/>
    <property type="match status" value="1"/>
</dbReference>
<dbReference type="SUPFAM" id="SSF56796">
    <property type="entry name" value="Dehydroquinate synthase-like"/>
    <property type="match status" value="1"/>
</dbReference>
<gene>
    <name evidence="1" type="primary">aroB</name>
    <name type="ordered locus">PSPTO_5126</name>
</gene>
<evidence type="ECO:0000255" key="1">
    <source>
        <dbReference type="HAMAP-Rule" id="MF_00110"/>
    </source>
</evidence>
<organism>
    <name type="scientific">Pseudomonas syringae pv. tomato (strain ATCC BAA-871 / DC3000)</name>
    <dbReference type="NCBI Taxonomy" id="223283"/>
    <lineage>
        <taxon>Bacteria</taxon>
        <taxon>Pseudomonadati</taxon>
        <taxon>Pseudomonadota</taxon>
        <taxon>Gammaproteobacteria</taxon>
        <taxon>Pseudomonadales</taxon>
        <taxon>Pseudomonadaceae</taxon>
        <taxon>Pseudomonas</taxon>
    </lineage>
</organism>
<feature type="chain" id="PRO_0000140770" description="3-dehydroquinate synthase">
    <location>
        <begin position="1"/>
        <end position="367"/>
    </location>
</feature>
<feature type="binding site" evidence="1">
    <location>
        <begin position="69"/>
        <end position="74"/>
    </location>
    <ligand>
        <name>NAD(+)</name>
        <dbReference type="ChEBI" id="CHEBI:57540"/>
    </ligand>
</feature>
<feature type="binding site" evidence="1">
    <location>
        <begin position="103"/>
        <end position="107"/>
    </location>
    <ligand>
        <name>NAD(+)</name>
        <dbReference type="ChEBI" id="CHEBI:57540"/>
    </ligand>
</feature>
<feature type="binding site" evidence="1">
    <location>
        <begin position="127"/>
        <end position="128"/>
    </location>
    <ligand>
        <name>NAD(+)</name>
        <dbReference type="ChEBI" id="CHEBI:57540"/>
    </ligand>
</feature>
<feature type="binding site" evidence="1">
    <location>
        <position position="140"/>
    </location>
    <ligand>
        <name>NAD(+)</name>
        <dbReference type="ChEBI" id="CHEBI:57540"/>
    </ligand>
</feature>
<feature type="binding site" evidence="1">
    <location>
        <position position="149"/>
    </location>
    <ligand>
        <name>NAD(+)</name>
        <dbReference type="ChEBI" id="CHEBI:57540"/>
    </ligand>
</feature>
<feature type="binding site" evidence="1">
    <location>
        <position position="182"/>
    </location>
    <ligand>
        <name>Zn(2+)</name>
        <dbReference type="ChEBI" id="CHEBI:29105"/>
    </ligand>
</feature>
<feature type="binding site" evidence="1">
    <location>
        <position position="245"/>
    </location>
    <ligand>
        <name>Zn(2+)</name>
        <dbReference type="ChEBI" id="CHEBI:29105"/>
    </ligand>
</feature>
<feature type="binding site" evidence="1">
    <location>
        <position position="262"/>
    </location>
    <ligand>
        <name>Zn(2+)</name>
        <dbReference type="ChEBI" id="CHEBI:29105"/>
    </ligand>
</feature>
<sequence>MQTLKVELGERSYPIHIGEGLLDQPELLAPHIVGRQVAIVSNTTVAPLYLERLTQTLAGYNVLPIVLPDGEAFKNWETLQTIFDGLLTARHDRRTTVIALGGGVIGDMAGFAAACYQRGVNFIQIPTTLLSQVDSSVGGKTGINHPLGKNMVGAFYQPSVVLIDTTSLNTLPERELSAGLAEVIKYGLICDEPFLTWLEEHVDALRGLDQAALTVAIERSCAAKALVVGADERESGVRATLNLGHTFGHAIETHMGYGVWLHGEAVAAGTVMALEMSSRLGWISTQERDRGIRLFQRAGLPVVPPQEMTEDNFLEHMAIDKKVIDGRLRLVLLRQIGEAVITDDYPQEVLQATLVADYRALVDQLRG</sequence>
<keyword id="KW-0028">Amino-acid biosynthesis</keyword>
<keyword id="KW-0057">Aromatic amino acid biosynthesis</keyword>
<keyword id="KW-0170">Cobalt</keyword>
<keyword id="KW-0963">Cytoplasm</keyword>
<keyword id="KW-0456">Lyase</keyword>
<keyword id="KW-0479">Metal-binding</keyword>
<keyword id="KW-0520">NAD</keyword>
<keyword id="KW-0547">Nucleotide-binding</keyword>
<keyword id="KW-1185">Reference proteome</keyword>
<keyword id="KW-0862">Zinc</keyword>
<comment type="function">
    <text evidence="1">Catalyzes the conversion of 3-deoxy-D-arabino-heptulosonate 7-phosphate (DAHP) to dehydroquinate (DHQ).</text>
</comment>
<comment type="catalytic activity">
    <reaction evidence="1">
        <text>7-phospho-2-dehydro-3-deoxy-D-arabino-heptonate = 3-dehydroquinate + phosphate</text>
        <dbReference type="Rhea" id="RHEA:21968"/>
        <dbReference type="ChEBI" id="CHEBI:32364"/>
        <dbReference type="ChEBI" id="CHEBI:43474"/>
        <dbReference type="ChEBI" id="CHEBI:58394"/>
        <dbReference type="EC" id="4.2.3.4"/>
    </reaction>
</comment>
<comment type="cofactor">
    <cofactor evidence="1">
        <name>NAD(+)</name>
        <dbReference type="ChEBI" id="CHEBI:57540"/>
    </cofactor>
</comment>
<comment type="cofactor">
    <cofactor evidence="1">
        <name>Co(2+)</name>
        <dbReference type="ChEBI" id="CHEBI:48828"/>
    </cofactor>
    <cofactor evidence="1">
        <name>Zn(2+)</name>
        <dbReference type="ChEBI" id="CHEBI:29105"/>
    </cofactor>
    <text evidence="1">Binds 1 divalent metal cation per subunit. Can use either Co(2+) or Zn(2+).</text>
</comment>
<comment type="pathway">
    <text evidence="1">Metabolic intermediate biosynthesis; chorismate biosynthesis; chorismate from D-erythrose 4-phosphate and phosphoenolpyruvate: step 2/7.</text>
</comment>
<comment type="subcellular location">
    <subcellularLocation>
        <location evidence="1">Cytoplasm</location>
    </subcellularLocation>
</comment>
<comment type="similarity">
    <text evidence="1">Belongs to the sugar phosphate cyclases superfamily. Dehydroquinate synthase family.</text>
</comment>
<name>AROB_PSESM</name>
<accession>Q87V15</accession>
<proteinExistence type="inferred from homology"/>